<gene>
    <name evidence="1" type="primary">bpt</name>
    <name type="ordered locus">Sama_2054</name>
</gene>
<feature type="chain" id="PRO_1000131997" description="Aspartate/glutamate leucyltransferase">
    <location>
        <begin position="1"/>
        <end position="237"/>
    </location>
</feature>
<name>BPT_SHEAM</name>
<proteinExistence type="inferred from homology"/>
<sequence>MESSTHVSVGISQLFQCSYLEDQQEQLLIIQEPFLDPLLFERLLQLGFRRSGDAIYKPRCPSCSACIALRVPVRSFQPSKRQKRTLAKNKDLTVNWVNESSDEHYALYEKYINLRHFDGPMFPASREQYEHFVLCDWAPPGFVELRLEGKLLAVAVTDVLPTSLSAIYSFFDPDFDARSLGSQLILTQMALAADMDKAFVYLGYQIDANRKMCYKRLYRPYQILTQNGWEFHTNANL</sequence>
<reference key="1">
    <citation type="submission" date="2006-12" db="EMBL/GenBank/DDBJ databases">
        <title>Complete sequence of Shewanella amazonensis SB2B.</title>
        <authorList>
            <consortium name="US DOE Joint Genome Institute"/>
            <person name="Copeland A."/>
            <person name="Lucas S."/>
            <person name="Lapidus A."/>
            <person name="Barry K."/>
            <person name="Detter J.C."/>
            <person name="Glavina del Rio T."/>
            <person name="Hammon N."/>
            <person name="Israni S."/>
            <person name="Dalin E."/>
            <person name="Tice H."/>
            <person name="Pitluck S."/>
            <person name="Munk A.C."/>
            <person name="Brettin T."/>
            <person name="Bruce D."/>
            <person name="Han C."/>
            <person name="Tapia R."/>
            <person name="Gilna P."/>
            <person name="Schmutz J."/>
            <person name="Larimer F."/>
            <person name="Land M."/>
            <person name="Hauser L."/>
            <person name="Kyrpides N."/>
            <person name="Mikhailova N."/>
            <person name="Fredrickson J."/>
            <person name="Richardson P."/>
        </authorList>
    </citation>
    <scope>NUCLEOTIDE SEQUENCE [LARGE SCALE GENOMIC DNA]</scope>
    <source>
        <strain>ATCC BAA-1098 / SB2B</strain>
    </source>
</reference>
<evidence type="ECO:0000255" key="1">
    <source>
        <dbReference type="HAMAP-Rule" id="MF_00689"/>
    </source>
</evidence>
<protein>
    <recommendedName>
        <fullName evidence="1">Aspartate/glutamate leucyltransferase</fullName>
        <ecNumber evidence="1">2.3.2.29</ecNumber>
    </recommendedName>
</protein>
<keyword id="KW-0012">Acyltransferase</keyword>
<keyword id="KW-0963">Cytoplasm</keyword>
<keyword id="KW-1185">Reference proteome</keyword>
<keyword id="KW-0808">Transferase</keyword>
<organism>
    <name type="scientific">Shewanella amazonensis (strain ATCC BAA-1098 / SB2B)</name>
    <dbReference type="NCBI Taxonomy" id="326297"/>
    <lineage>
        <taxon>Bacteria</taxon>
        <taxon>Pseudomonadati</taxon>
        <taxon>Pseudomonadota</taxon>
        <taxon>Gammaproteobacteria</taxon>
        <taxon>Alteromonadales</taxon>
        <taxon>Shewanellaceae</taxon>
        <taxon>Shewanella</taxon>
    </lineage>
</organism>
<dbReference type="EC" id="2.3.2.29" evidence="1"/>
<dbReference type="EMBL" id="CP000507">
    <property type="protein sequence ID" value="ABM00260.1"/>
    <property type="molecule type" value="Genomic_DNA"/>
</dbReference>
<dbReference type="RefSeq" id="WP_011760167.1">
    <property type="nucleotide sequence ID" value="NC_008700.1"/>
</dbReference>
<dbReference type="SMR" id="A1S7A3"/>
<dbReference type="STRING" id="326297.Sama_2054"/>
<dbReference type="KEGG" id="saz:Sama_2054"/>
<dbReference type="eggNOG" id="COG2935">
    <property type="taxonomic scope" value="Bacteria"/>
</dbReference>
<dbReference type="HOGENOM" id="CLU_077607_0_0_6"/>
<dbReference type="OrthoDB" id="9782022at2"/>
<dbReference type="Proteomes" id="UP000009175">
    <property type="component" value="Chromosome"/>
</dbReference>
<dbReference type="GO" id="GO:0005737">
    <property type="term" value="C:cytoplasm"/>
    <property type="evidence" value="ECO:0007669"/>
    <property type="project" value="UniProtKB-SubCell"/>
</dbReference>
<dbReference type="GO" id="GO:0004057">
    <property type="term" value="F:arginyl-tRNA--protein transferase activity"/>
    <property type="evidence" value="ECO:0007669"/>
    <property type="project" value="InterPro"/>
</dbReference>
<dbReference type="GO" id="GO:0008914">
    <property type="term" value="F:leucyl-tRNA--protein transferase activity"/>
    <property type="evidence" value="ECO:0007669"/>
    <property type="project" value="UniProtKB-UniRule"/>
</dbReference>
<dbReference type="GO" id="GO:0071596">
    <property type="term" value="P:ubiquitin-dependent protein catabolic process via the N-end rule pathway"/>
    <property type="evidence" value="ECO:0007669"/>
    <property type="project" value="InterPro"/>
</dbReference>
<dbReference type="HAMAP" id="MF_00689">
    <property type="entry name" value="Bpt"/>
    <property type="match status" value="1"/>
</dbReference>
<dbReference type="InterPro" id="IPR016181">
    <property type="entry name" value="Acyl_CoA_acyltransferase"/>
</dbReference>
<dbReference type="InterPro" id="IPR017138">
    <property type="entry name" value="Asp_Glu_LeuTrfase"/>
</dbReference>
<dbReference type="InterPro" id="IPR030700">
    <property type="entry name" value="N-end_Aminoacyl_Trfase"/>
</dbReference>
<dbReference type="InterPro" id="IPR007472">
    <property type="entry name" value="N-end_Aminoacyl_Trfase_C"/>
</dbReference>
<dbReference type="InterPro" id="IPR007471">
    <property type="entry name" value="N-end_Aminoacyl_Trfase_N"/>
</dbReference>
<dbReference type="NCBIfam" id="NF002342">
    <property type="entry name" value="PRK01305.1-3"/>
    <property type="match status" value="1"/>
</dbReference>
<dbReference type="NCBIfam" id="NF002345">
    <property type="entry name" value="PRK01305.2-2"/>
    <property type="match status" value="1"/>
</dbReference>
<dbReference type="NCBIfam" id="NF002346">
    <property type="entry name" value="PRK01305.2-3"/>
    <property type="match status" value="1"/>
</dbReference>
<dbReference type="NCBIfam" id="NF002347">
    <property type="entry name" value="PRK01305.2-4"/>
    <property type="match status" value="1"/>
</dbReference>
<dbReference type="PANTHER" id="PTHR21367">
    <property type="entry name" value="ARGININE-TRNA-PROTEIN TRANSFERASE 1"/>
    <property type="match status" value="1"/>
</dbReference>
<dbReference type="PANTHER" id="PTHR21367:SF1">
    <property type="entry name" value="ARGINYL-TRNA--PROTEIN TRANSFERASE 1"/>
    <property type="match status" value="1"/>
</dbReference>
<dbReference type="Pfam" id="PF04377">
    <property type="entry name" value="ATE_C"/>
    <property type="match status" value="1"/>
</dbReference>
<dbReference type="Pfam" id="PF04376">
    <property type="entry name" value="ATE_N"/>
    <property type="match status" value="1"/>
</dbReference>
<dbReference type="PIRSF" id="PIRSF037208">
    <property type="entry name" value="ATE_pro_prd"/>
    <property type="match status" value="1"/>
</dbReference>
<dbReference type="SUPFAM" id="SSF55729">
    <property type="entry name" value="Acyl-CoA N-acyltransferases (Nat)"/>
    <property type="match status" value="1"/>
</dbReference>
<comment type="function">
    <text evidence="1">Functions in the N-end rule pathway of protein degradation where it conjugates Leu from its aminoacyl-tRNA to the N-termini of proteins containing an N-terminal aspartate or glutamate.</text>
</comment>
<comment type="catalytic activity">
    <reaction evidence="1">
        <text>N-terminal L-glutamyl-[protein] + L-leucyl-tRNA(Leu) = N-terminal L-leucyl-L-glutamyl-[protein] + tRNA(Leu) + H(+)</text>
        <dbReference type="Rhea" id="RHEA:50412"/>
        <dbReference type="Rhea" id="RHEA-COMP:9613"/>
        <dbReference type="Rhea" id="RHEA-COMP:9622"/>
        <dbReference type="Rhea" id="RHEA-COMP:12664"/>
        <dbReference type="Rhea" id="RHEA-COMP:12668"/>
        <dbReference type="ChEBI" id="CHEBI:15378"/>
        <dbReference type="ChEBI" id="CHEBI:64721"/>
        <dbReference type="ChEBI" id="CHEBI:78442"/>
        <dbReference type="ChEBI" id="CHEBI:78494"/>
        <dbReference type="ChEBI" id="CHEBI:133041"/>
        <dbReference type="EC" id="2.3.2.29"/>
    </reaction>
</comment>
<comment type="catalytic activity">
    <reaction evidence="1">
        <text>N-terminal L-aspartyl-[protein] + L-leucyl-tRNA(Leu) = N-terminal L-leucyl-L-aspartyl-[protein] + tRNA(Leu) + H(+)</text>
        <dbReference type="Rhea" id="RHEA:50420"/>
        <dbReference type="Rhea" id="RHEA-COMP:9613"/>
        <dbReference type="Rhea" id="RHEA-COMP:9622"/>
        <dbReference type="Rhea" id="RHEA-COMP:12669"/>
        <dbReference type="Rhea" id="RHEA-COMP:12674"/>
        <dbReference type="ChEBI" id="CHEBI:15378"/>
        <dbReference type="ChEBI" id="CHEBI:64720"/>
        <dbReference type="ChEBI" id="CHEBI:78442"/>
        <dbReference type="ChEBI" id="CHEBI:78494"/>
        <dbReference type="ChEBI" id="CHEBI:133042"/>
        <dbReference type="EC" id="2.3.2.29"/>
    </reaction>
</comment>
<comment type="subcellular location">
    <subcellularLocation>
        <location evidence="1">Cytoplasm</location>
    </subcellularLocation>
</comment>
<comment type="similarity">
    <text evidence="1">Belongs to the R-transferase family. Bpt subfamily.</text>
</comment>
<accession>A1S7A3</accession>